<dbReference type="SMR" id="P56666"/>
<dbReference type="STRING" id="4577.P56666"/>
<dbReference type="PaxDb" id="4577-GRMZM2G135447_P01"/>
<dbReference type="eggNOG" id="KOG0773">
    <property type="taxonomic scope" value="Eukaryota"/>
</dbReference>
<dbReference type="InParanoid" id="P56666"/>
<dbReference type="Proteomes" id="UP000007305">
    <property type="component" value="Unplaced"/>
</dbReference>
<dbReference type="ExpressionAtlas" id="P56666">
    <property type="expression patterns" value="baseline and differential"/>
</dbReference>
<dbReference type="GO" id="GO:0005634">
    <property type="term" value="C:nucleus"/>
    <property type="evidence" value="ECO:0007669"/>
    <property type="project" value="UniProtKB-SubCell"/>
</dbReference>
<dbReference type="GO" id="GO:0003677">
    <property type="term" value="F:DNA binding"/>
    <property type="evidence" value="ECO:0007669"/>
    <property type="project" value="UniProtKB-KW"/>
</dbReference>
<dbReference type="GO" id="GO:0000981">
    <property type="term" value="F:DNA-binding transcription factor activity, RNA polymerase II-specific"/>
    <property type="evidence" value="ECO:0007669"/>
    <property type="project" value="InterPro"/>
</dbReference>
<dbReference type="CDD" id="cd00086">
    <property type="entry name" value="homeodomain"/>
    <property type="match status" value="1"/>
</dbReference>
<dbReference type="Gene3D" id="1.10.10.60">
    <property type="entry name" value="Homeodomain-like"/>
    <property type="match status" value="1"/>
</dbReference>
<dbReference type="InterPro" id="IPR005539">
    <property type="entry name" value="ELK_dom"/>
</dbReference>
<dbReference type="InterPro" id="IPR001356">
    <property type="entry name" value="HD"/>
</dbReference>
<dbReference type="InterPro" id="IPR017970">
    <property type="entry name" value="Homeobox_CS"/>
</dbReference>
<dbReference type="InterPro" id="IPR009057">
    <property type="entry name" value="Homeodomain-like_sf"/>
</dbReference>
<dbReference type="InterPro" id="IPR008422">
    <property type="entry name" value="KN_HD"/>
</dbReference>
<dbReference type="InterPro" id="IPR050224">
    <property type="entry name" value="TALE_homeobox"/>
</dbReference>
<dbReference type="PANTHER" id="PTHR11850">
    <property type="entry name" value="HOMEOBOX PROTEIN TRANSCRIPTION FACTORS"/>
    <property type="match status" value="1"/>
</dbReference>
<dbReference type="Pfam" id="PF03789">
    <property type="entry name" value="ELK"/>
    <property type="match status" value="1"/>
</dbReference>
<dbReference type="Pfam" id="PF05920">
    <property type="entry name" value="Homeobox_KN"/>
    <property type="match status" value="1"/>
</dbReference>
<dbReference type="SMART" id="SM01188">
    <property type="entry name" value="ELK"/>
    <property type="match status" value="1"/>
</dbReference>
<dbReference type="SMART" id="SM00389">
    <property type="entry name" value="HOX"/>
    <property type="match status" value="1"/>
</dbReference>
<dbReference type="SUPFAM" id="SSF46689">
    <property type="entry name" value="Homeodomain-like"/>
    <property type="match status" value="1"/>
</dbReference>
<dbReference type="PROSITE" id="PS51213">
    <property type="entry name" value="ELK"/>
    <property type="match status" value="1"/>
</dbReference>
<dbReference type="PROSITE" id="PS00027">
    <property type="entry name" value="HOMEOBOX_1"/>
    <property type="match status" value="1"/>
</dbReference>
<dbReference type="PROSITE" id="PS50071">
    <property type="entry name" value="HOMEOBOX_2"/>
    <property type="match status" value="1"/>
</dbReference>
<keyword id="KW-0238">DNA-binding</keyword>
<keyword id="KW-0371">Homeobox</keyword>
<keyword id="KW-0539">Nucleus</keyword>
<keyword id="KW-1185">Reference proteome</keyword>
<reference key="1">
    <citation type="journal article" date="1994" name="Plant Cell">
        <title>Sequence analysis and expression patterns divide the Maize knotted1-like homeobox genes into two classes.</title>
        <authorList>
            <person name="Kerstetter R."/>
            <person name="Vollbrecht E."/>
            <person name="Lowe B."/>
            <person name="Veit B."/>
            <person name="Yamaguchi J."/>
            <person name="Hake S."/>
        </authorList>
    </citation>
    <scope>NUCLEOTIDE SEQUENCE</scope>
    <source>
        <tissue>Ear of corn</tissue>
        <tissue>Seedling</tissue>
    </source>
</reference>
<organism>
    <name type="scientific">Zea mays</name>
    <name type="common">Maize</name>
    <dbReference type="NCBI Taxonomy" id="4577"/>
    <lineage>
        <taxon>Eukaryota</taxon>
        <taxon>Viridiplantae</taxon>
        <taxon>Streptophyta</taxon>
        <taxon>Embryophyta</taxon>
        <taxon>Tracheophyta</taxon>
        <taxon>Spermatophyta</taxon>
        <taxon>Magnoliopsida</taxon>
        <taxon>Liliopsida</taxon>
        <taxon>Poales</taxon>
        <taxon>Poaceae</taxon>
        <taxon>PACMAD clade</taxon>
        <taxon>Panicoideae</taxon>
        <taxon>Andropogonodae</taxon>
        <taxon>Andropogoneae</taxon>
        <taxon>Tripsacinae</taxon>
        <taxon>Zea</taxon>
    </lineage>
</organism>
<proteinExistence type="evidence at transcript level"/>
<evidence type="ECO:0000255" key="1">
    <source>
        <dbReference type="PROSITE-ProRule" id="PRU00108"/>
    </source>
</evidence>
<evidence type="ECO:0000255" key="2">
    <source>
        <dbReference type="PROSITE-ProRule" id="PRU00559"/>
    </source>
</evidence>
<evidence type="ECO:0000305" key="3"/>
<feature type="chain" id="PRO_0000048969" description="Homeobox protein knotted-1-like 8">
    <location>
        <begin position="1" status="less than"/>
        <end position="85" status="greater than"/>
    </location>
</feature>
<feature type="domain" description="ELK" evidence="2">
    <location>
        <begin position="1"/>
        <end position="21"/>
    </location>
</feature>
<feature type="DNA-binding region" description="Homeobox; TALE-type" evidence="1">
    <location>
        <begin position="22"/>
        <end position="85"/>
    </location>
</feature>
<feature type="non-terminal residue">
    <location>
        <position position="1"/>
    </location>
</feature>
<feature type="non-terminal residue">
    <location>
        <position position="85"/>
    </location>
</feature>
<gene>
    <name type="primary">KNOX8</name>
</gene>
<accession>P56666</accession>
<sequence>ELKHQLLRKYGGYLGGLRQEFSKRKKKGKLPKEARQKLLHWWELHYKWPYPSETEKMALAETTGLDPKQINNWFINQRKRHWKPA</sequence>
<protein>
    <recommendedName>
        <fullName>Homeobox protein knotted-1-like 8</fullName>
    </recommendedName>
</protein>
<name>KNOX8_MAIZE</name>
<comment type="function">
    <text>Probably binds to the DNA sequence 5'-TGAC-3'.</text>
</comment>
<comment type="subcellular location">
    <subcellularLocation>
        <location evidence="3">Nucleus</location>
    </subcellularLocation>
</comment>
<comment type="tissue specificity">
    <text>Strongly expressed in ear inflorescence primordia and shoot meristem. Weakly expressed in embryos. Absent from leaves.</text>
</comment>
<comment type="similarity">
    <text evidence="2">Belongs to the TALE/KNOX homeobox family.</text>
</comment>